<protein>
    <recommendedName>
        <fullName>Phosphoglucomutase</fullName>
        <shortName>PGM</shortName>
        <ecNumber>5.4.2.2</ecNumber>
    </recommendedName>
    <alternativeName>
        <fullName>Alpha-phosphoglucomutase</fullName>
    </alternativeName>
    <alternativeName>
        <fullName>Glucose phosphomutase</fullName>
    </alternativeName>
</protein>
<comment type="function">
    <text evidence="1">Catalyzes the interconversion between glucose-6-phosphate and alpha-glucose-1-phosphate. This is the first step in the biosynthesis of diglucosyl-diacylglycerol (Glc2-DAG), i.e. a glycolipid found in the membrane, which is also used as a membrane anchor for lipoteichoic acid (LTA) (By similarity).</text>
</comment>
<comment type="catalytic activity">
    <reaction>
        <text>alpha-D-glucose 1-phosphate = alpha-D-glucose 6-phosphate</text>
        <dbReference type="Rhea" id="RHEA:23536"/>
        <dbReference type="ChEBI" id="CHEBI:58225"/>
        <dbReference type="ChEBI" id="CHEBI:58601"/>
        <dbReference type="EC" id="5.4.2.2"/>
    </reaction>
</comment>
<comment type="cofactor">
    <cofactor evidence="1">
        <name>Mg(2+)</name>
        <dbReference type="ChEBI" id="CHEBI:18420"/>
    </cofactor>
    <text evidence="1">Binds 1 Mg(2+) ion per subunit.</text>
</comment>
<comment type="pathway">
    <text>Glycolipid metabolism; diglucosyl-diacylglycerol biosynthesis.</text>
</comment>
<comment type="similarity">
    <text evidence="2">Belongs to the phosphohexose mutase family.</text>
</comment>
<reference key="1">
    <citation type="journal article" date="2003" name="Mol. Microbiol.">
        <title>Genome-based analysis of virulence genes in a non-biofilm-forming Staphylococcus epidermidis strain (ATCC 12228).</title>
        <authorList>
            <person name="Zhang Y.-Q."/>
            <person name="Ren S.-X."/>
            <person name="Li H.-L."/>
            <person name="Wang Y.-X."/>
            <person name="Fu G."/>
            <person name="Yang J."/>
            <person name="Qin Z.-Q."/>
            <person name="Miao Y.-G."/>
            <person name="Wang W.-Y."/>
            <person name="Chen R.-S."/>
            <person name="Shen Y."/>
            <person name="Chen Z."/>
            <person name="Yuan Z.-H."/>
            <person name="Zhao G.-P."/>
            <person name="Qu D."/>
            <person name="Danchin A."/>
            <person name="Wen Y.-M."/>
        </authorList>
    </citation>
    <scope>NUCLEOTIDE SEQUENCE [LARGE SCALE GENOMIC DNA]</scope>
    <source>
        <strain>ATCC 12228 / FDA PCI 1200</strain>
    </source>
</reference>
<evidence type="ECO:0000250" key="1"/>
<evidence type="ECO:0000305" key="2"/>
<proteinExistence type="inferred from homology"/>
<name>PGCA_STAES</name>
<sequence length="546" mass="60899">MKNNWIDVLDESLVKDFYNNQTSEEQQEGLNTTLSFGTAGIRGKFGLGEGRLNKFTVSKVALGFAHYLTSSIAHPVVVIHYDTRHLSPEFAQIIANILASLDIKVYLADTYRTTPDLSFAVRYLQADAGVMITASHNPKDYNGIKVYGEDGAQLSTDDSARLSTYIDKLGHPLHINLPSLTTEQQSLIHSVPSEVREDYFKNVQDLVGTIPQSDLKVVFTSLHGTSVPVVPDILSSLNFNQFELVASQCEPDSDFSSVASANPEDHKAFDQSIELANLIDADLLIGTDPDADRLGIVERDAEGNIYYYNGNQIGALLLNYRIKQTEGLPNRIMFQSIVSGGLAKSLAQYHNVNFKEVLTGFKYIAAEIRHLSPEQNFIFGYEESYGFLARPFVRDKDAIQIVPLMIKYAAELKNEGRMLKDELEDITRNVGNFNDKLFSHTFEGTQGKAKIENIMTQFRSETPTEMCGLKVIAIEDFETGKKTDLQNDEVSDITLPKANVIKIYFNEGFIALRPSGTEPKIKLYVSLSCDHFDVIAQKINDAIFNS</sequence>
<accession>Q8CN38</accession>
<gene>
    <name type="primary">pgcA</name>
    <name type="ordered locus">SE_2042</name>
</gene>
<keyword id="KW-0119">Carbohydrate metabolism</keyword>
<keyword id="KW-0313">Glucose metabolism</keyword>
<keyword id="KW-0413">Isomerase</keyword>
<keyword id="KW-0460">Magnesium</keyword>
<keyword id="KW-0479">Metal-binding</keyword>
<keyword id="KW-0597">Phosphoprotein</keyword>
<organism>
    <name type="scientific">Staphylococcus epidermidis (strain ATCC 12228 / FDA PCI 1200)</name>
    <dbReference type="NCBI Taxonomy" id="176280"/>
    <lineage>
        <taxon>Bacteria</taxon>
        <taxon>Bacillati</taxon>
        <taxon>Bacillota</taxon>
        <taxon>Bacilli</taxon>
        <taxon>Bacillales</taxon>
        <taxon>Staphylococcaceae</taxon>
        <taxon>Staphylococcus</taxon>
    </lineage>
</organism>
<dbReference type="EC" id="5.4.2.2"/>
<dbReference type="EMBL" id="AE015929">
    <property type="protein sequence ID" value="AAO05683.1"/>
    <property type="molecule type" value="Genomic_DNA"/>
</dbReference>
<dbReference type="RefSeq" id="NP_765597.1">
    <property type="nucleotide sequence ID" value="NC_004461.1"/>
</dbReference>
<dbReference type="RefSeq" id="WP_002484958.1">
    <property type="nucleotide sequence ID" value="NC_004461.1"/>
</dbReference>
<dbReference type="SMR" id="Q8CN38"/>
<dbReference type="KEGG" id="sep:SE_2042"/>
<dbReference type="PATRIC" id="fig|176280.10.peg.1995"/>
<dbReference type="eggNOG" id="COG1109">
    <property type="taxonomic scope" value="Bacteria"/>
</dbReference>
<dbReference type="HOGENOM" id="CLU_016950_0_0_9"/>
<dbReference type="OrthoDB" id="9806956at2"/>
<dbReference type="UniPathway" id="UPA00894"/>
<dbReference type="Proteomes" id="UP000001411">
    <property type="component" value="Chromosome"/>
</dbReference>
<dbReference type="GO" id="GO:0000287">
    <property type="term" value="F:magnesium ion binding"/>
    <property type="evidence" value="ECO:0007669"/>
    <property type="project" value="InterPro"/>
</dbReference>
<dbReference type="GO" id="GO:0004614">
    <property type="term" value="F:phosphoglucomutase activity"/>
    <property type="evidence" value="ECO:0007669"/>
    <property type="project" value="UniProtKB-EC"/>
</dbReference>
<dbReference type="GO" id="GO:0008973">
    <property type="term" value="F:phosphopentomutase activity"/>
    <property type="evidence" value="ECO:0007669"/>
    <property type="project" value="TreeGrafter"/>
</dbReference>
<dbReference type="GO" id="GO:0009246">
    <property type="term" value="P:enterobacterial common antigen biosynthetic process"/>
    <property type="evidence" value="ECO:0007669"/>
    <property type="project" value="UniProtKB-UniPathway"/>
</dbReference>
<dbReference type="GO" id="GO:0006006">
    <property type="term" value="P:glucose metabolic process"/>
    <property type="evidence" value="ECO:0007669"/>
    <property type="project" value="UniProtKB-KW"/>
</dbReference>
<dbReference type="GO" id="GO:0006166">
    <property type="term" value="P:purine ribonucleoside salvage"/>
    <property type="evidence" value="ECO:0007669"/>
    <property type="project" value="TreeGrafter"/>
</dbReference>
<dbReference type="CDD" id="cd05799">
    <property type="entry name" value="PGM2"/>
    <property type="match status" value="1"/>
</dbReference>
<dbReference type="Gene3D" id="3.40.120.10">
    <property type="entry name" value="Alpha-D-Glucose-1,6-Bisphosphate, subunit A, domain 3"/>
    <property type="match status" value="3"/>
</dbReference>
<dbReference type="Gene3D" id="3.30.310.50">
    <property type="entry name" value="Alpha-D-phosphohexomutase, C-terminal domain"/>
    <property type="match status" value="1"/>
</dbReference>
<dbReference type="InterPro" id="IPR005844">
    <property type="entry name" value="A-D-PHexomutase_a/b/a-I"/>
</dbReference>
<dbReference type="InterPro" id="IPR016055">
    <property type="entry name" value="A-D-PHexomutase_a/b/a-I/II/III"/>
</dbReference>
<dbReference type="InterPro" id="IPR005845">
    <property type="entry name" value="A-D-PHexomutase_a/b/a-II"/>
</dbReference>
<dbReference type="InterPro" id="IPR005846">
    <property type="entry name" value="A-D-PHexomutase_a/b/a-III"/>
</dbReference>
<dbReference type="InterPro" id="IPR005843">
    <property type="entry name" value="A-D-PHexomutase_C"/>
</dbReference>
<dbReference type="InterPro" id="IPR036900">
    <property type="entry name" value="A-D-PHexomutase_C_sf"/>
</dbReference>
<dbReference type="InterPro" id="IPR016066">
    <property type="entry name" value="A-D-PHexomutase_CS"/>
</dbReference>
<dbReference type="InterPro" id="IPR005841">
    <property type="entry name" value="Alpha-D-phosphohexomutase_SF"/>
</dbReference>
<dbReference type="PANTHER" id="PTHR45745:SF1">
    <property type="entry name" value="PHOSPHOGLUCOMUTASE 2B-RELATED"/>
    <property type="match status" value="1"/>
</dbReference>
<dbReference type="PANTHER" id="PTHR45745">
    <property type="entry name" value="PHOSPHOMANNOMUTASE 45A"/>
    <property type="match status" value="1"/>
</dbReference>
<dbReference type="Pfam" id="PF02878">
    <property type="entry name" value="PGM_PMM_I"/>
    <property type="match status" value="1"/>
</dbReference>
<dbReference type="Pfam" id="PF02879">
    <property type="entry name" value="PGM_PMM_II"/>
    <property type="match status" value="1"/>
</dbReference>
<dbReference type="Pfam" id="PF02880">
    <property type="entry name" value="PGM_PMM_III"/>
    <property type="match status" value="1"/>
</dbReference>
<dbReference type="Pfam" id="PF00408">
    <property type="entry name" value="PGM_PMM_IV"/>
    <property type="match status" value="1"/>
</dbReference>
<dbReference type="PRINTS" id="PR00509">
    <property type="entry name" value="PGMPMM"/>
</dbReference>
<dbReference type="SUPFAM" id="SSF55957">
    <property type="entry name" value="Phosphoglucomutase, C-terminal domain"/>
    <property type="match status" value="1"/>
</dbReference>
<dbReference type="SUPFAM" id="SSF53738">
    <property type="entry name" value="Phosphoglucomutase, first 3 domains"/>
    <property type="match status" value="3"/>
</dbReference>
<dbReference type="PROSITE" id="PS00710">
    <property type="entry name" value="PGM_PMM"/>
    <property type="match status" value="1"/>
</dbReference>
<feature type="chain" id="PRO_0000308346" description="Phosphoglucomutase">
    <location>
        <begin position="1"/>
        <end position="546"/>
    </location>
</feature>
<feature type="active site" description="Phosphoserine intermediate" evidence="1">
    <location>
        <position position="135"/>
    </location>
</feature>
<feature type="binding site" description="via phosphate group" evidence="1">
    <location>
        <position position="135"/>
    </location>
    <ligand>
        <name>Mg(2+)</name>
        <dbReference type="ChEBI" id="CHEBI:18420"/>
    </ligand>
</feature>
<feature type="binding site" evidence="1">
    <location>
        <position position="288"/>
    </location>
    <ligand>
        <name>Mg(2+)</name>
        <dbReference type="ChEBI" id="CHEBI:18420"/>
    </ligand>
</feature>
<feature type="binding site" evidence="1">
    <location>
        <position position="290"/>
    </location>
    <ligand>
        <name>Mg(2+)</name>
        <dbReference type="ChEBI" id="CHEBI:18420"/>
    </ligand>
</feature>
<feature type="binding site" evidence="1">
    <location>
        <position position="292"/>
    </location>
    <ligand>
        <name>Mg(2+)</name>
        <dbReference type="ChEBI" id="CHEBI:18420"/>
    </ligand>
</feature>